<comment type="function">
    <text evidence="1">Probably part of an ABC transporter complex. Responsible for energy coupling to the transport system (By similarity).</text>
</comment>
<comment type="subcellular location">
    <subcellularLocation>
        <location evidence="1">Cell membrane</location>
        <topology evidence="1">Peripheral membrane protein</topology>
    </subcellularLocation>
</comment>
<comment type="similarity">
    <text evidence="3">Belongs to the ABC transporter superfamily.</text>
</comment>
<keyword id="KW-0067">ATP-binding</keyword>
<keyword id="KW-1003">Cell membrane</keyword>
<keyword id="KW-0472">Membrane</keyword>
<keyword id="KW-0547">Nucleotide-binding</keyword>
<keyword id="KW-1185">Reference proteome</keyword>
<keyword id="KW-0677">Repeat</keyword>
<keyword id="KW-1278">Translocase</keyword>
<keyword id="KW-0813">Transport</keyword>
<accession>Q93D97</accession>
<accession>Q7CE91</accession>
<proteinExistence type="inferred from homology"/>
<name>Y1934_STRMU</name>
<reference key="1">
    <citation type="journal article" date="2002" name="J. Dent. Res.">
        <title>Novel sucrose-dependent adhesion co-factors in Streptococcus mutans.</title>
        <authorList>
            <person name="Tao L."/>
            <person name="Tanzer J.M."/>
        </authorList>
    </citation>
    <scope>NUCLEOTIDE SEQUENCE [GENOMIC DNA]</scope>
    <source>
        <strain>LT11</strain>
    </source>
</reference>
<reference key="2">
    <citation type="journal article" date="2002" name="Proc. Natl. Acad. Sci. U.S.A.">
        <title>Genome sequence of Streptococcus mutans UA159, a cariogenic dental pathogen.</title>
        <authorList>
            <person name="Ajdic D.J."/>
            <person name="McShan W.M."/>
            <person name="McLaughlin R.E."/>
            <person name="Savic G."/>
            <person name="Chang J."/>
            <person name="Carson M.B."/>
            <person name="Primeaux C."/>
            <person name="Tian R."/>
            <person name="Kenton S."/>
            <person name="Jia H.G."/>
            <person name="Lin S.P."/>
            <person name="Qian Y."/>
            <person name="Li S."/>
            <person name="Zhu H."/>
            <person name="Najar F.Z."/>
            <person name="Lai H."/>
            <person name="White J."/>
            <person name="Roe B.A."/>
            <person name="Ferretti J.J."/>
        </authorList>
    </citation>
    <scope>NUCLEOTIDE SEQUENCE [LARGE SCALE GENOMIC DNA]</scope>
    <source>
        <strain>ATCC 700610 / UA159</strain>
    </source>
</reference>
<sequence>MKPFIEFKDFSFKYDAQAEPTLKEITLSIEKGEKVLIIGPSGSGKSTIGHCLNGIIPNIYKGQAEGSLTIDGKDVFDLSIYEKSHLVSTVLQDPDGQFIGLTVAEDLAFALENDCVAHETMFERVDTWADKLDLKELLQHRPQDLSGGQKQRVSLAGVMIDESPVLLFDEPLANLDPKSGQDTIDLIDHLHQTAETTTIIIEHRLEDVLYRPVDRVILINEGQVLFNGSPNDLLKTSLLQENGIREPLYVTVLRHLGLDIKNTSHLANLEQLDLSGVSFAGDISLKEPQEPQVLFDIQHLNFAYSSERPILKNLSFTLNKGERLAIVGKNGAGKSTLAKALCQFISYAGQIFYQGQDIASDSIKERSERIGYVLQNPNQMISQTMIFDEVALGLRLRGVDDSQIEKRVLKVLKTCGLYEFRKWPISALSFGQKKRVTIASILVLNPEVILLDEPTAGQDKKHYTEMMSFLNDLHALGHTIIMITHDMQLMLEYSDRALVISDGQILADQSPITLFNQPDILRIANLKQTSIFDLAQRLNCDPIALTHYYIDQQGGEDE</sequence>
<feature type="chain" id="PRO_0000092097" description="Putative ABC transporter ATP-binding protein SMU_1934c">
    <location>
        <begin position="1"/>
        <end position="558"/>
    </location>
</feature>
<feature type="domain" description="ABC transporter 1" evidence="2">
    <location>
        <begin position="5"/>
        <end position="246"/>
    </location>
</feature>
<feature type="domain" description="ABC transporter 2" evidence="2">
    <location>
        <begin position="295"/>
        <end position="527"/>
    </location>
</feature>
<feature type="binding site" evidence="2">
    <location>
        <begin position="39"/>
        <end position="46"/>
    </location>
    <ligand>
        <name>ATP</name>
        <dbReference type="ChEBI" id="CHEBI:30616"/>
        <label>1</label>
    </ligand>
</feature>
<feature type="binding site" evidence="2">
    <location>
        <begin position="328"/>
        <end position="335"/>
    </location>
    <ligand>
        <name>ATP</name>
        <dbReference type="ChEBI" id="CHEBI:30616"/>
        <label>2</label>
    </ligand>
</feature>
<protein>
    <recommendedName>
        <fullName>Putative ABC transporter ATP-binding protein SMU_1934c</fullName>
        <ecNumber>7.-.-.-</ecNumber>
    </recommendedName>
</protein>
<gene>
    <name type="primary">sdcBA</name>
    <name type="ordered locus">SMU_1934c</name>
</gene>
<evidence type="ECO:0000250" key="1"/>
<evidence type="ECO:0000255" key="2">
    <source>
        <dbReference type="PROSITE-ProRule" id="PRU00434"/>
    </source>
</evidence>
<evidence type="ECO:0000305" key="3"/>
<dbReference type="EC" id="7.-.-.-"/>
<dbReference type="EMBL" id="AF397166">
    <property type="protein sequence ID" value="AAL04084.1"/>
    <property type="molecule type" value="Genomic_DNA"/>
</dbReference>
<dbReference type="EMBL" id="AE014133">
    <property type="protein sequence ID" value="AAN59544.1"/>
    <property type="molecule type" value="Genomic_DNA"/>
</dbReference>
<dbReference type="RefSeq" id="NP_722238.1">
    <property type="nucleotide sequence ID" value="NC_004350.2"/>
</dbReference>
<dbReference type="RefSeq" id="WP_002262130.1">
    <property type="nucleotide sequence ID" value="NC_004350.2"/>
</dbReference>
<dbReference type="SMR" id="Q93D97"/>
<dbReference type="STRING" id="210007.SMU_1934c"/>
<dbReference type="KEGG" id="smu:SMU_1934c"/>
<dbReference type="PATRIC" id="fig|210007.7.peg.1719"/>
<dbReference type="eggNOG" id="COG1122">
    <property type="taxonomic scope" value="Bacteria"/>
</dbReference>
<dbReference type="HOGENOM" id="CLU_000604_86_7_9"/>
<dbReference type="OrthoDB" id="501320at2"/>
<dbReference type="PhylomeDB" id="Q93D97"/>
<dbReference type="Proteomes" id="UP000002512">
    <property type="component" value="Chromosome"/>
</dbReference>
<dbReference type="GO" id="GO:0043190">
    <property type="term" value="C:ATP-binding cassette (ABC) transporter complex"/>
    <property type="evidence" value="ECO:0007669"/>
    <property type="project" value="TreeGrafter"/>
</dbReference>
<dbReference type="GO" id="GO:0005524">
    <property type="term" value="F:ATP binding"/>
    <property type="evidence" value="ECO:0007669"/>
    <property type="project" value="UniProtKB-KW"/>
</dbReference>
<dbReference type="GO" id="GO:0016887">
    <property type="term" value="F:ATP hydrolysis activity"/>
    <property type="evidence" value="ECO:0007669"/>
    <property type="project" value="InterPro"/>
</dbReference>
<dbReference type="GO" id="GO:0042626">
    <property type="term" value="F:ATPase-coupled transmembrane transporter activity"/>
    <property type="evidence" value="ECO:0007669"/>
    <property type="project" value="TreeGrafter"/>
</dbReference>
<dbReference type="CDD" id="cd03225">
    <property type="entry name" value="ABC_cobalt_CbiO_domain1"/>
    <property type="match status" value="2"/>
</dbReference>
<dbReference type="FunFam" id="3.40.50.300:FF:001422">
    <property type="entry name" value="Cobalt ABC transporter ATP-binding protein"/>
    <property type="match status" value="1"/>
</dbReference>
<dbReference type="FunFam" id="3.40.50.300:FF:000224">
    <property type="entry name" value="Energy-coupling factor transporter ATP-binding protein EcfA"/>
    <property type="match status" value="1"/>
</dbReference>
<dbReference type="Gene3D" id="3.40.50.300">
    <property type="entry name" value="P-loop containing nucleotide triphosphate hydrolases"/>
    <property type="match status" value="2"/>
</dbReference>
<dbReference type="InterPro" id="IPR003593">
    <property type="entry name" value="AAA+_ATPase"/>
</dbReference>
<dbReference type="InterPro" id="IPR022216">
    <property type="entry name" value="ABC_Co_transporter"/>
</dbReference>
<dbReference type="InterPro" id="IPR003439">
    <property type="entry name" value="ABC_transporter-like_ATP-bd"/>
</dbReference>
<dbReference type="InterPro" id="IPR017871">
    <property type="entry name" value="ABC_transporter-like_CS"/>
</dbReference>
<dbReference type="InterPro" id="IPR015856">
    <property type="entry name" value="ABC_transpr_CbiO/EcfA_su"/>
</dbReference>
<dbReference type="InterPro" id="IPR050095">
    <property type="entry name" value="ECF_ABC_transporter_ATP-bd"/>
</dbReference>
<dbReference type="InterPro" id="IPR027417">
    <property type="entry name" value="P-loop_NTPase"/>
</dbReference>
<dbReference type="NCBIfam" id="NF010167">
    <property type="entry name" value="PRK13648.1"/>
    <property type="match status" value="2"/>
</dbReference>
<dbReference type="PANTHER" id="PTHR43553:SF26">
    <property type="entry name" value="ABC TRANSPORTER ATP-BINDING PROTEIN BC_2655-RELATED"/>
    <property type="match status" value="1"/>
</dbReference>
<dbReference type="PANTHER" id="PTHR43553">
    <property type="entry name" value="HEAVY METAL TRANSPORTER"/>
    <property type="match status" value="1"/>
</dbReference>
<dbReference type="Pfam" id="PF00005">
    <property type="entry name" value="ABC_tran"/>
    <property type="match status" value="2"/>
</dbReference>
<dbReference type="Pfam" id="PF12558">
    <property type="entry name" value="DUF3744"/>
    <property type="match status" value="1"/>
</dbReference>
<dbReference type="SMART" id="SM00382">
    <property type="entry name" value="AAA"/>
    <property type="match status" value="2"/>
</dbReference>
<dbReference type="SUPFAM" id="SSF52540">
    <property type="entry name" value="P-loop containing nucleoside triphosphate hydrolases"/>
    <property type="match status" value="2"/>
</dbReference>
<dbReference type="PROSITE" id="PS00211">
    <property type="entry name" value="ABC_TRANSPORTER_1"/>
    <property type="match status" value="2"/>
</dbReference>
<dbReference type="PROSITE" id="PS50893">
    <property type="entry name" value="ABC_TRANSPORTER_2"/>
    <property type="match status" value="2"/>
</dbReference>
<organism>
    <name type="scientific">Streptococcus mutans serotype c (strain ATCC 700610 / UA159)</name>
    <dbReference type="NCBI Taxonomy" id="210007"/>
    <lineage>
        <taxon>Bacteria</taxon>
        <taxon>Bacillati</taxon>
        <taxon>Bacillota</taxon>
        <taxon>Bacilli</taxon>
        <taxon>Lactobacillales</taxon>
        <taxon>Streptococcaceae</taxon>
        <taxon>Streptococcus</taxon>
    </lineage>
</organism>